<sequence length="409" mass="44285">MLGSTGSIGTQTLQIAEEFPEQFRVVALTAGQNLDLLVQQIQRHQPELVALANADLLPELQQRLDALGTDRKRPQLVGGPDGLNIAASWESADLVVTGIVGCAGLLPTLAAVRAGKDLALANKETLIAAGPVVLPELKKSGSRLLPADSEHSAIFQCLQGTPWAENARLSTGVPTPGLRRIQLTASGGAFRDWKAEDLENATVADATSHPNWSMGRKITVDSASLMNKGLEVIEAHYLFGLDYDHIEIVIHPQSIIHSMIELADSSVLAQLGWPDMKLPILYCLSWPSRLETPWRRLDLTEVGQLSFRAPDPAKYPCMQLAYAAGRAGGTMPAVMNAANEEAVAQFLEEKIHFLDIPVVIEAACERHKADLIAHPQLEDVLAVDQWARMAVREQVKRGTTRVPLAALAA</sequence>
<evidence type="ECO:0000255" key="1">
    <source>
        <dbReference type="HAMAP-Rule" id="MF_00183"/>
    </source>
</evidence>
<dbReference type="EC" id="1.1.1.267" evidence="1"/>
<dbReference type="EMBL" id="BX569690">
    <property type="protein sequence ID" value="CAE07213.1"/>
    <property type="molecule type" value="Genomic_DNA"/>
</dbReference>
<dbReference type="SMR" id="Q7U8C3"/>
<dbReference type="STRING" id="84588.SYNW0698"/>
<dbReference type="KEGG" id="syw:SYNW0698"/>
<dbReference type="eggNOG" id="COG0743">
    <property type="taxonomic scope" value="Bacteria"/>
</dbReference>
<dbReference type="HOGENOM" id="CLU_035714_4_0_3"/>
<dbReference type="UniPathway" id="UPA00056">
    <property type="reaction ID" value="UER00092"/>
</dbReference>
<dbReference type="Proteomes" id="UP000001422">
    <property type="component" value="Chromosome"/>
</dbReference>
<dbReference type="GO" id="GO:0030604">
    <property type="term" value="F:1-deoxy-D-xylulose-5-phosphate reductoisomerase activity"/>
    <property type="evidence" value="ECO:0007669"/>
    <property type="project" value="UniProtKB-UniRule"/>
</dbReference>
<dbReference type="GO" id="GO:0030145">
    <property type="term" value="F:manganese ion binding"/>
    <property type="evidence" value="ECO:0007669"/>
    <property type="project" value="TreeGrafter"/>
</dbReference>
<dbReference type="GO" id="GO:0070402">
    <property type="term" value="F:NADPH binding"/>
    <property type="evidence" value="ECO:0007669"/>
    <property type="project" value="InterPro"/>
</dbReference>
<dbReference type="GO" id="GO:0051484">
    <property type="term" value="P:isopentenyl diphosphate biosynthetic process, methylerythritol 4-phosphate pathway involved in terpenoid biosynthetic process"/>
    <property type="evidence" value="ECO:0007669"/>
    <property type="project" value="TreeGrafter"/>
</dbReference>
<dbReference type="FunFam" id="3.40.50.720:FF:000045">
    <property type="entry name" value="1-deoxy-D-xylulose 5-phosphate reductoisomerase"/>
    <property type="match status" value="1"/>
</dbReference>
<dbReference type="Gene3D" id="1.10.1740.10">
    <property type="match status" value="1"/>
</dbReference>
<dbReference type="Gene3D" id="3.40.50.720">
    <property type="entry name" value="NAD(P)-binding Rossmann-like Domain"/>
    <property type="match status" value="1"/>
</dbReference>
<dbReference type="HAMAP" id="MF_00183">
    <property type="entry name" value="DXP_reductoisom"/>
    <property type="match status" value="1"/>
</dbReference>
<dbReference type="InterPro" id="IPR003821">
    <property type="entry name" value="DXP_reductoisomerase"/>
</dbReference>
<dbReference type="InterPro" id="IPR013644">
    <property type="entry name" value="DXP_reductoisomerase_C"/>
</dbReference>
<dbReference type="InterPro" id="IPR013512">
    <property type="entry name" value="DXP_reductoisomerase_N"/>
</dbReference>
<dbReference type="InterPro" id="IPR026877">
    <property type="entry name" value="DXPR_C"/>
</dbReference>
<dbReference type="InterPro" id="IPR036169">
    <property type="entry name" value="DXPR_C_sf"/>
</dbReference>
<dbReference type="InterPro" id="IPR036291">
    <property type="entry name" value="NAD(P)-bd_dom_sf"/>
</dbReference>
<dbReference type="NCBIfam" id="TIGR00243">
    <property type="entry name" value="Dxr"/>
    <property type="match status" value="1"/>
</dbReference>
<dbReference type="NCBIfam" id="NF009114">
    <property type="entry name" value="PRK12464.1"/>
    <property type="match status" value="1"/>
</dbReference>
<dbReference type="PANTHER" id="PTHR30525">
    <property type="entry name" value="1-DEOXY-D-XYLULOSE 5-PHOSPHATE REDUCTOISOMERASE"/>
    <property type="match status" value="1"/>
</dbReference>
<dbReference type="PANTHER" id="PTHR30525:SF0">
    <property type="entry name" value="1-DEOXY-D-XYLULOSE 5-PHOSPHATE REDUCTOISOMERASE, CHLOROPLASTIC"/>
    <property type="match status" value="1"/>
</dbReference>
<dbReference type="Pfam" id="PF08436">
    <property type="entry name" value="DXP_redisom_C"/>
    <property type="match status" value="1"/>
</dbReference>
<dbReference type="Pfam" id="PF02670">
    <property type="entry name" value="DXP_reductoisom"/>
    <property type="match status" value="1"/>
</dbReference>
<dbReference type="Pfam" id="PF13288">
    <property type="entry name" value="DXPR_C"/>
    <property type="match status" value="1"/>
</dbReference>
<dbReference type="PIRSF" id="PIRSF006205">
    <property type="entry name" value="Dxp_reductismrs"/>
    <property type="match status" value="1"/>
</dbReference>
<dbReference type="SUPFAM" id="SSF69055">
    <property type="entry name" value="1-deoxy-D-xylulose-5-phosphate reductoisomerase, C-terminal domain"/>
    <property type="match status" value="1"/>
</dbReference>
<dbReference type="SUPFAM" id="SSF55347">
    <property type="entry name" value="Glyceraldehyde-3-phosphate dehydrogenase-like, C-terminal domain"/>
    <property type="match status" value="1"/>
</dbReference>
<dbReference type="SUPFAM" id="SSF51735">
    <property type="entry name" value="NAD(P)-binding Rossmann-fold domains"/>
    <property type="match status" value="1"/>
</dbReference>
<organism>
    <name type="scientific">Parasynechococcus marenigrum (strain WH8102)</name>
    <dbReference type="NCBI Taxonomy" id="84588"/>
    <lineage>
        <taxon>Bacteria</taxon>
        <taxon>Bacillati</taxon>
        <taxon>Cyanobacteriota</taxon>
        <taxon>Cyanophyceae</taxon>
        <taxon>Synechococcales</taxon>
        <taxon>Prochlorococcaceae</taxon>
        <taxon>Parasynechococcus</taxon>
        <taxon>Parasynechococcus marenigrum</taxon>
    </lineage>
</organism>
<proteinExistence type="inferred from homology"/>
<protein>
    <recommendedName>
        <fullName evidence="1">1-deoxy-D-xylulose 5-phosphate reductoisomerase</fullName>
        <shortName evidence="1">DXP reductoisomerase</shortName>
        <ecNumber evidence="1">1.1.1.267</ecNumber>
    </recommendedName>
    <alternativeName>
        <fullName evidence="1">1-deoxyxylulose-5-phosphate reductoisomerase</fullName>
    </alternativeName>
    <alternativeName>
        <fullName evidence="1">2-C-methyl-D-erythritol 4-phosphate synthase</fullName>
    </alternativeName>
</protein>
<keyword id="KW-0414">Isoprene biosynthesis</keyword>
<keyword id="KW-0464">Manganese</keyword>
<keyword id="KW-0479">Metal-binding</keyword>
<keyword id="KW-0521">NADP</keyword>
<keyword id="KW-0560">Oxidoreductase</keyword>
<comment type="function">
    <text evidence="1">Catalyzes the NADPH-dependent rearrangement and reduction of 1-deoxy-D-xylulose-5-phosphate (DXP) to 2-C-methyl-D-erythritol 4-phosphate (MEP).</text>
</comment>
<comment type="catalytic activity">
    <reaction evidence="1">
        <text>2-C-methyl-D-erythritol 4-phosphate + NADP(+) = 1-deoxy-D-xylulose 5-phosphate + NADPH + H(+)</text>
        <dbReference type="Rhea" id="RHEA:13717"/>
        <dbReference type="ChEBI" id="CHEBI:15378"/>
        <dbReference type="ChEBI" id="CHEBI:57783"/>
        <dbReference type="ChEBI" id="CHEBI:57792"/>
        <dbReference type="ChEBI" id="CHEBI:58262"/>
        <dbReference type="ChEBI" id="CHEBI:58349"/>
        <dbReference type="EC" id="1.1.1.267"/>
    </reaction>
    <physiologicalReaction direction="right-to-left" evidence="1">
        <dbReference type="Rhea" id="RHEA:13719"/>
    </physiologicalReaction>
</comment>
<comment type="cofactor">
    <cofactor evidence="1">
        <name>Mg(2+)</name>
        <dbReference type="ChEBI" id="CHEBI:18420"/>
    </cofactor>
    <cofactor evidence="1">
        <name>Mn(2+)</name>
        <dbReference type="ChEBI" id="CHEBI:29035"/>
    </cofactor>
</comment>
<comment type="pathway">
    <text evidence="1">Isoprenoid biosynthesis; isopentenyl diphosphate biosynthesis via DXP pathway; isopentenyl diphosphate from 1-deoxy-D-xylulose 5-phosphate: step 1/6.</text>
</comment>
<comment type="similarity">
    <text evidence="1">Belongs to the DXR family.</text>
</comment>
<accession>Q7U8C3</accession>
<gene>
    <name evidence="1" type="primary">dxr</name>
    <name type="ordered locus">SYNW0698</name>
</gene>
<reference key="1">
    <citation type="journal article" date="2003" name="Nature">
        <title>The genome of a motile marine Synechococcus.</title>
        <authorList>
            <person name="Palenik B."/>
            <person name="Brahamsha B."/>
            <person name="Larimer F.W."/>
            <person name="Land M.L."/>
            <person name="Hauser L."/>
            <person name="Chain P."/>
            <person name="Lamerdin J.E."/>
            <person name="Regala W."/>
            <person name="Allen E.E."/>
            <person name="McCarren J."/>
            <person name="Paulsen I.T."/>
            <person name="Dufresne A."/>
            <person name="Partensky F."/>
            <person name="Webb E.A."/>
            <person name="Waterbury J."/>
        </authorList>
    </citation>
    <scope>NUCLEOTIDE SEQUENCE [LARGE SCALE GENOMIC DNA]</scope>
    <source>
        <strain>WH8102</strain>
    </source>
</reference>
<name>DXR_PARMW</name>
<feature type="chain" id="PRO_0000163720" description="1-deoxy-D-xylulose 5-phosphate reductoisomerase">
    <location>
        <begin position="1"/>
        <end position="409"/>
    </location>
</feature>
<feature type="binding site" evidence="1">
    <location>
        <position position="5"/>
    </location>
    <ligand>
        <name>NADPH</name>
        <dbReference type="ChEBI" id="CHEBI:57783"/>
    </ligand>
</feature>
<feature type="binding site" evidence="1">
    <location>
        <position position="6"/>
    </location>
    <ligand>
        <name>NADPH</name>
        <dbReference type="ChEBI" id="CHEBI:57783"/>
    </ligand>
</feature>
<feature type="binding site" evidence="1">
    <location>
        <position position="7"/>
    </location>
    <ligand>
        <name>NADPH</name>
        <dbReference type="ChEBI" id="CHEBI:57783"/>
    </ligand>
</feature>
<feature type="binding site" evidence="1">
    <location>
        <position position="8"/>
    </location>
    <ligand>
        <name>NADPH</name>
        <dbReference type="ChEBI" id="CHEBI:57783"/>
    </ligand>
</feature>
<feature type="binding site" evidence="1">
    <location>
        <position position="31"/>
    </location>
    <ligand>
        <name>NADPH</name>
        <dbReference type="ChEBI" id="CHEBI:57783"/>
    </ligand>
</feature>
<feature type="binding site" evidence="1">
    <location>
        <position position="33"/>
    </location>
    <ligand>
        <name>NADPH</name>
        <dbReference type="ChEBI" id="CHEBI:57783"/>
    </ligand>
</feature>
<feature type="binding site" evidence="1">
    <location>
        <position position="122"/>
    </location>
    <ligand>
        <name>NADPH</name>
        <dbReference type="ChEBI" id="CHEBI:57783"/>
    </ligand>
</feature>
<feature type="binding site" evidence="1">
    <location>
        <position position="123"/>
    </location>
    <ligand>
        <name>1-deoxy-D-xylulose 5-phosphate</name>
        <dbReference type="ChEBI" id="CHEBI:57792"/>
    </ligand>
</feature>
<feature type="binding site" evidence="1">
    <location>
        <position position="124"/>
    </location>
    <ligand>
        <name>NADPH</name>
        <dbReference type="ChEBI" id="CHEBI:57783"/>
    </ligand>
</feature>
<feature type="binding site" evidence="1">
    <location>
        <position position="148"/>
    </location>
    <ligand>
        <name>Mn(2+)</name>
        <dbReference type="ChEBI" id="CHEBI:29035"/>
    </ligand>
</feature>
<feature type="binding site" evidence="1">
    <location>
        <position position="149"/>
    </location>
    <ligand>
        <name>1-deoxy-D-xylulose 5-phosphate</name>
        <dbReference type="ChEBI" id="CHEBI:57792"/>
    </ligand>
</feature>
<feature type="binding site" evidence="1">
    <location>
        <position position="150"/>
    </location>
    <ligand>
        <name>1-deoxy-D-xylulose 5-phosphate</name>
        <dbReference type="ChEBI" id="CHEBI:57792"/>
    </ligand>
</feature>
<feature type="binding site" evidence="1">
    <location>
        <position position="150"/>
    </location>
    <ligand>
        <name>Mn(2+)</name>
        <dbReference type="ChEBI" id="CHEBI:29035"/>
    </ligand>
</feature>
<feature type="binding site" evidence="1">
    <location>
        <position position="186"/>
    </location>
    <ligand>
        <name>1-deoxy-D-xylulose 5-phosphate</name>
        <dbReference type="ChEBI" id="CHEBI:57792"/>
    </ligand>
</feature>
<feature type="binding site" evidence="1">
    <location>
        <position position="209"/>
    </location>
    <ligand>
        <name>1-deoxy-D-xylulose 5-phosphate</name>
        <dbReference type="ChEBI" id="CHEBI:57792"/>
    </ligand>
</feature>
<feature type="binding site" evidence="1">
    <location>
        <position position="215"/>
    </location>
    <ligand>
        <name>NADPH</name>
        <dbReference type="ChEBI" id="CHEBI:57783"/>
    </ligand>
</feature>
<feature type="binding site" evidence="1">
    <location>
        <position position="222"/>
    </location>
    <ligand>
        <name>1-deoxy-D-xylulose 5-phosphate</name>
        <dbReference type="ChEBI" id="CHEBI:57792"/>
    </ligand>
</feature>
<feature type="binding site" evidence="1">
    <location>
        <position position="227"/>
    </location>
    <ligand>
        <name>1-deoxy-D-xylulose 5-phosphate</name>
        <dbReference type="ChEBI" id="CHEBI:57792"/>
    </ligand>
</feature>
<feature type="binding site" evidence="1">
    <location>
        <position position="228"/>
    </location>
    <ligand>
        <name>1-deoxy-D-xylulose 5-phosphate</name>
        <dbReference type="ChEBI" id="CHEBI:57792"/>
    </ligand>
</feature>
<feature type="binding site" evidence="1">
    <location>
        <position position="231"/>
    </location>
    <ligand>
        <name>1-deoxy-D-xylulose 5-phosphate</name>
        <dbReference type="ChEBI" id="CHEBI:57792"/>
    </ligand>
</feature>
<feature type="binding site" evidence="1">
    <location>
        <position position="231"/>
    </location>
    <ligand>
        <name>Mn(2+)</name>
        <dbReference type="ChEBI" id="CHEBI:29035"/>
    </ligand>
</feature>